<dbReference type="EMBL" id="AY083905">
    <property type="protein sequence ID" value="AAM12395.1"/>
    <property type="molecule type" value="Genomic_DNA"/>
</dbReference>
<dbReference type="EMBL" id="AE008692">
    <property type="protein sequence ID" value="AAV88986.1"/>
    <property type="molecule type" value="Genomic_DNA"/>
</dbReference>
<dbReference type="EMBL" id="L33777">
    <property type="protein sequence ID" value="AAA27703.1"/>
    <property type="molecule type" value="Genomic_DNA"/>
</dbReference>
<dbReference type="PIR" id="T46897">
    <property type="entry name" value="T46897"/>
</dbReference>
<dbReference type="RefSeq" id="WP_011240284.1">
    <property type="nucleotide sequence ID" value="NZ_CP035711.1"/>
</dbReference>
<dbReference type="SMR" id="Q56998"/>
<dbReference type="STRING" id="264203.ZMO0362"/>
<dbReference type="GeneID" id="79904433"/>
<dbReference type="KEGG" id="zmo:ZMO0362"/>
<dbReference type="eggNOG" id="COG0556">
    <property type="taxonomic scope" value="Bacteria"/>
</dbReference>
<dbReference type="HOGENOM" id="CLU_009621_2_1_5"/>
<dbReference type="Proteomes" id="UP000001173">
    <property type="component" value="Chromosome"/>
</dbReference>
<dbReference type="GO" id="GO:0005737">
    <property type="term" value="C:cytoplasm"/>
    <property type="evidence" value="ECO:0007669"/>
    <property type="project" value="UniProtKB-SubCell"/>
</dbReference>
<dbReference type="GO" id="GO:0009380">
    <property type="term" value="C:excinuclease repair complex"/>
    <property type="evidence" value="ECO:0007669"/>
    <property type="project" value="InterPro"/>
</dbReference>
<dbReference type="GO" id="GO:0005524">
    <property type="term" value="F:ATP binding"/>
    <property type="evidence" value="ECO:0007669"/>
    <property type="project" value="UniProtKB-UniRule"/>
</dbReference>
<dbReference type="GO" id="GO:0016887">
    <property type="term" value="F:ATP hydrolysis activity"/>
    <property type="evidence" value="ECO:0007669"/>
    <property type="project" value="InterPro"/>
</dbReference>
<dbReference type="GO" id="GO:0003677">
    <property type="term" value="F:DNA binding"/>
    <property type="evidence" value="ECO:0007669"/>
    <property type="project" value="UniProtKB-UniRule"/>
</dbReference>
<dbReference type="GO" id="GO:0009381">
    <property type="term" value="F:excinuclease ABC activity"/>
    <property type="evidence" value="ECO:0007669"/>
    <property type="project" value="UniProtKB-UniRule"/>
</dbReference>
<dbReference type="GO" id="GO:0006289">
    <property type="term" value="P:nucleotide-excision repair"/>
    <property type="evidence" value="ECO:0007669"/>
    <property type="project" value="UniProtKB-UniRule"/>
</dbReference>
<dbReference type="GO" id="GO:0009432">
    <property type="term" value="P:SOS response"/>
    <property type="evidence" value="ECO:0007669"/>
    <property type="project" value="UniProtKB-UniRule"/>
</dbReference>
<dbReference type="CDD" id="cd17916">
    <property type="entry name" value="DEXHc_UvrB"/>
    <property type="match status" value="1"/>
</dbReference>
<dbReference type="CDD" id="cd18790">
    <property type="entry name" value="SF2_C_UvrB"/>
    <property type="match status" value="1"/>
</dbReference>
<dbReference type="Gene3D" id="3.40.50.300">
    <property type="entry name" value="P-loop containing nucleotide triphosphate hydrolases"/>
    <property type="match status" value="3"/>
</dbReference>
<dbReference type="Gene3D" id="4.10.860.10">
    <property type="entry name" value="UVR domain"/>
    <property type="match status" value="1"/>
</dbReference>
<dbReference type="HAMAP" id="MF_00204">
    <property type="entry name" value="UvrB"/>
    <property type="match status" value="1"/>
</dbReference>
<dbReference type="InterPro" id="IPR006935">
    <property type="entry name" value="Helicase/UvrB_N"/>
</dbReference>
<dbReference type="InterPro" id="IPR014001">
    <property type="entry name" value="Helicase_ATP-bd"/>
</dbReference>
<dbReference type="InterPro" id="IPR001650">
    <property type="entry name" value="Helicase_C-like"/>
</dbReference>
<dbReference type="InterPro" id="IPR027417">
    <property type="entry name" value="P-loop_NTPase"/>
</dbReference>
<dbReference type="InterPro" id="IPR001943">
    <property type="entry name" value="UVR_dom"/>
</dbReference>
<dbReference type="InterPro" id="IPR036876">
    <property type="entry name" value="UVR_dom_sf"/>
</dbReference>
<dbReference type="InterPro" id="IPR004807">
    <property type="entry name" value="UvrB"/>
</dbReference>
<dbReference type="InterPro" id="IPR041471">
    <property type="entry name" value="UvrB_inter"/>
</dbReference>
<dbReference type="InterPro" id="IPR024759">
    <property type="entry name" value="UvrB_YAD/RRR_dom"/>
</dbReference>
<dbReference type="NCBIfam" id="NF003673">
    <property type="entry name" value="PRK05298.1"/>
    <property type="match status" value="1"/>
</dbReference>
<dbReference type="NCBIfam" id="TIGR00631">
    <property type="entry name" value="uvrb"/>
    <property type="match status" value="1"/>
</dbReference>
<dbReference type="PANTHER" id="PTHR24029">
    <property type="entry name" value="UVRABC SYSTEM PROTEIN B"/>
    <property type="match status" value="1"/>
</dbReference>
<dbReference type="PANTHER" id="PTHR24029:SF0">
    <property type="entry name" value="UVRABC SYSTEM PROTEIN B"/>
    <property type="match status" value="1"/>
</dbReference>
<dbReference type="Pfam" id="PF00271">
    <property type="entry name" value="Helicase_C"/>
    <property type="match status" value="1"/>
</dbReference>
<dbReference type="Pfam" id="PF04851">
    <property type="entry name" value="ResIII"/>
    <property type="match status" value="1"/>
</dbReference>
<dbReference type="Pfam" id="PF02151">
    <property type="entry name" value="UVR"/>
    <property type="match status" value="1"/>
</dbReference>
<dbReference type="Pfam" id="PF12344">
    <property type="entry name" value="UvrB"/>
    <property type="match status" value="1"/>
</dbReference>
<dbReference type="Pfam" id="PF17757">
    <property type="entry name" value="UvrB_inter"/>
    <property type="match status" value="1"/>
</dbReference>
<dbReference type="SMART" id="SM00487">
    <property type="entry name" value="DEXDc"/>
    <property type="match status" value="1"/>
</dbReference>
<dbReference type="SMART" id="SM00490">
    <property type="entry name" value="HELICc"/>
    <property type="match status" value="1"/>
</dbReference>
<dbReference type="SUPFAM" id="SSF46600">
    <property type="entry name" value="C-terminal UvrC-binding domain of UvrB"/>
    <property type="match status" value="1"/>
</dbReference>
<dbReference type="SUPFAM" id="SSF52540">
    <property type="entry name" value="P-loop containing nucleoside triphosphate hydrolases"/>
    <property type="match status" value="2"/>
</dbReference>
<dbReference type="PROSITE" id="PS51192">
    <property type="entry name" value="HELICASE_ATP_BIND_1"/>
    <property type="match status" value="1"/>
</dbReference>
<dbReference type="PROSITE" id="PS51194">
    <property type="entry name" value="HELICASE_CTER"/>
    <property type="match status" value="1"/>
</dbReference>
<dbReference type="PROSITE" id="PS50151">
    <property type="entry name" value="UVR"/>
    <property type="match status" value="1"/>
</dbReference>
<sequence length="740" mass="83724">MTIAIRTTLDEPENHSDFVPHRPSRPEKTEPSKPFRLVSDYEPAGDQPQAISALCKDIQKGERDQVLLGVTGSGKTFTMAKVIEKLQRPSLILAPNKILAAQLYGEFKRFFPENAVEFFVSYYDYYQPEAYVPRTDTYIEKDSAINEAIDRMRHAATRSLLEREDVIIVASVSCLYGIGSVDTYSSMTFRLLKGQLVDQREIIRRLVALQYKRNEVAFGRGSFRVKGDTLEIFPSHYEDMAWRISFFGDEIEEISEFDPLTGVKIAKLDQIKIYANSHYVTPEPTLKAANNAIRRELDNRLREFKAEGKLLEAQRLEERTEFDLEMMAATGACSGIENYSRFLTGRAPGEPPPTLFEYLPDNALLFVDESHQTIPQINGMSRGDYRRKTTLADYGFRLPSCIDNRPLRFEEWNAMRPQTVYVSATPGPWELEQTGGVFVEQIIRPTGLVDPAIEVRPIEEQVDNLIFEAKKTAAAGWRSLVTTLTKRMAEDLTEYMYEAGLKVRYMHSDVETIERIELIRDLRLGVYDVLIGINLLREGLDIPECGLVAVLDADKEGFLRSETSLIQTIGRAARNAEGRVILYGDKITGSMARAMAETERRRIKQIAWNKAHNITPATVKRQVDDIVGHFGVVNSSEAAATIENHDPKVLARSISETEKEMLEAAANLEFEKAAQLRDVLHQLKRQELGLPPEKSSEIQGRSEAGRPGTRKTRSDKAREAKASKRVKQEAGEKLLRSRGH</sequence>
<protein>
    <recommendedName>
        <fullName evidence="1">UvrABC system protein B</fullName>
        <shortName evidence="1">Protein UvrB</shortName>
    </recommendedName>
    <alternativeName>
        <fullName evidence="1">Excinuclease ABC subunit B</fullName>
    </alternativeName>
</protein>
<accession>Q56998</accession>
<accession>Q5NQL8</accession>
<accession>Q8GM48</accession>
<comment type="function">
    <text evidence="1">The UvrABC repair system catalyzes the recognition and processing of DNA lesions. A damage recognition complex composed of 2 UvrA and 2 UvrB subunits scans DNA for abnormalities. Upon binding of the UvrA(2)B(2) complex to a putative damaged site, the DNA wraps around one UvrB monomer. DNA wrap is dependent on ATP binding by UvrB and probably causes local melting of the DNA helix, facilitating insertion of UvrB beta-hairpin between the DNA strands. Then UvrB probes one DNA strand for the presence of a lesion. If a lesion is found the UvrA subunits dissociate and the UvrB-DNA preincision complex is formed. This complex is subsequently bound by UvrC and the second UvrB is released. If no lesion is found, the DNA wraps around the other UvrB subunit that will check the other stand for damage.</text>
</comment>
<comment type="subunit">
    <text evidence="1">Forms a heterotetramer with UvrA during the search for lesions. Interacts with UvrC in an incision complex.</text>
</comment>
<comment type="subcellular location">
    <subcellularLocation>
        <location evidence="1">Cytoplasm</location>
    </subcellularLocation>
</comment>
<comment type="domain">
    <text evidence="1">The beta-hairpin motif is involved in DNA binding.</text>
</comment>
<comment type="similarity">
    <text evidence="1">Belongs to the UvrB family.</text>
</comment>
<gene>
    <name evidence="1" type="primary">uvrB</name>
    <name type="ordered locus">ZMO0362</name>
</gene>
<name>UVRB_ZYMMO</name>
<feature type="chain" id="PRO_0000138452" description="UvrABC system protein B">
    <location>
        <begin position="1"/>
        <end position="740"/>
    </location>
</feature>
<feature type="domain" description="Helicase ATP-binding" evidence="1">
    <location>
        <begin position="56"/>
        <end position="444"/>
    </location>
</feature>
<feature type="domain" description="Helicase C-terminal" evidence="1">
    <location>
        <begin position="461"/>
        <end position="627"/>
    </location>
</feature>
<feature type="domain" description="UVR" evidence="1">
    <location>
        <begin position="651"/>
        <end position="686"/>
    </location>
</feature>
<feature type="region of interest" description="Disordered" evidence="2">
    <location>
        <begin position="1"/>
        <end position="36"/>
    </location>
</feature>
<feature type="region of interest" description="Disordered" evidence="2">
    <location>
        <begin position="687"/>
        <end position="740"/>
    </location>
</feature>
<feature type="short sequence motif" description="Beta-hairpin">
    <location>
        <begin position="122"/>
        <end position="145"/>
    </location>
</feature>
<feature type="compositionally biased region" description="Basic and acidic residues" evidence="2">
    <location>
        <begin position="8"/>
        <end position="33"/>
    </location>
</feature>
<feature type="compositionally biased region" description="Basic and acidic residues" evidence="2">
    <location>
        <begin position="712"/>
        <end position="740"/>
    </location>
</feature>
<feature type="binding site" evidence="1">
    <location>
        <begin position="69"/>
        <end position="76"/>
    </location>
    <ligand>
        <name>ATP</name>
        <dbReference type="ChEBI" id="CHEBI:30616"/>
    </ligand>
</feature>
<feature type="sequence conflict" description="In Ref. 1." evidence="3" ref="1">
    <original>FKAEGKLLEAQRLEERTEFDLEMMAATGACSGIE</original>
    <variation>SKLKVNYWKRRFGKAHRIRSGNDGCNRCLFRYS</variation>
    <location>
        <begin position="304"/>
        <end position="337"/>
    </location>
</feature>
<feature type="sequence conflict" description="In Ref. 1; AAM12395." evidence="3" ref="1">
    <original>T</original>
    <variation>N</variation>
    <location>
        <position position="419"/>
    </location>
</feature>
<feature type="sequence conflict" description="In Ref. 3." evidence="3" ref="3">
    <original>PIEEQVDNL</original>
    <variation>RPQLTLTKG</variation>
    <location>
        <begin position="457"/>
        <end position="465"/>
    </location>
</feature>
<reference key="1">
    <citation type="submission" date="2002-03" db="EMBL/GenBank/DDBJ databases">
        <title>Isolation and characterization of the uvrA, uvrB and uvrD genes from the ethanol producing bacterium Zymomonas mobilis strain CP4.</title>
        <authorList>
            <person name="Beletsiotis E.A."/>
            <person name="Oikonomou I."/>
            <person name="Typas M.A."/>
        </authorList>
    </citation>
    <scope>NUCLEOTIDE SEQUENCE [GENOMIC DNA]</scope>
    <source>
        <strain>ATCC 31821 / ZM4 / CP4</strain>
    </source>
</reference>
<reference key="2">
    <citation type="journal article" date="2005" name="Nat. Biotechnol.">
        <title>The genome sequence of the ethanologenic bacterium Zymomonas mobilis ZM4.</title>
        <authorList>
            <person name="Seo J.-S."/>
            <person name="Chong H."/>
            <person name="Park H.S."/>
            <person name="Yoon K.-O."/>
            <person name="Jung C."/>
            <person name="Kim J.J."/>
            <person name="Hong J.H."/>
            <person name="Kim H."/>
            <person name="Kim J.-H."/>
            <person name="Kil J.-I."/>
            <person name="Park C.J."/>
            <person name="Oh H.-M."/>
            <person name="Lee J.-S."/>
            <person name="Jin S.-J."/>
            <person name="Um H.-W."/>
            <person name="Lee H.-J."/>
            <person name="Oh S.-J."/>
            <person name="Kim J.Y."/>
            <person name="Kang H.L."/>
            <person name="Lee S.Y."/>
            <person name="Lee K.J."/>
            <person name="Kang H.S."/>
        </authorList>
    </citation>
    <scope>NUCLEOTIDE SEQUENCE [LARGE SCALE GENOMIC DNA]</scope>
    <source>
        <strain>ATCC 31821 / ZM4 / CP4</strain>
    </source>
</reference>
<reference key="3">
    <citation type="submission" date="1994-06" db="EMBL/GenBank/DDBJ databases">
        <authorList>
            <person name="Reuter K.K.H."/>
            <person name="Ficner R."/>
        </authorList>
    </citation>
    <scope>NUCLEOTIDE SEQUENCE [GENOMIC DNA] OF 457-740</scope>
</reference>
<proteinExistence type="inferred from homology"/>
<evidence type="ECO:0000255" key="1">
    <source>
        <dbReference type="HAMAP-Rule" id="MF_00204"/>
    </source>
</evidence>
<evidence type="ECO:0000256" key="2">
    <source>
        <dbReference type="SAM" id="MobiDB-lite"/>
    </source>
</evidence>
<evidence type="ECO:0000305" key="3"/>
<organism>
    <name type="scientific">Zymomonas mobilis subsp. mobilis (strain ATCC 31821 / ZM4 / CP4)</name>
    <dbReference type="NCBI Taxonomy" id="264203"/>
    <lineage>
        <taxon>Bacteria</taxon>
        <taxon>Pseudomonadati</taxon>
        <taxon>Pseudomonadota</taxon>
        <taxon>Alphaproteobacteria</taxon>
        <taxon>Sphingomonadales</taxon>
        <taxon>Zymomonadaceae</taxon>
        <taxon>Zymomonas</taxon>
    </lineage>
</organism>
<keyword id="KW-0067">ATP-binding</keyword>
<keyword id="KW-0963">Cytoplasm</keyword>
<keyword id="KW-0227">DNA damage</keyword>
<keyword id="KW-0228">DNA excision</keyword>
<keyword id="KW-0234">DNA repair</keyword>
<keyword id="KW-0267">Excision nuclease</keyword>
<keyword id="KW-0547">Nucleotide-binding</keyword>
<keyword id="KW-1185">Reference proteome</keyword>
<keyword id="KW-0742">SOS response</keyword>